<feature type="chain" id="PRO_0000061823" description="Cytochrome b6">
    <location>
        <begin position="1"/>
        <end position="215"/>
    </location>
</feature>
<feature type="transmembrane region" description="Helical" evidence="2">
    <location>
        <begin position="32"/>
        <end position="52"/>
    </location>
</feature>
<feature type="transmembrane region" description="Helical" evidence="2">
    <location>
        <begin position="90"/>
        <end position="110"/>
    </location>
</feature>
<feature type="transmembrane region" description="Helical" evidence="2">
    <location>
        <begin position="116"/>
        <end position="136"/>
    </location>
</feature>
<feature type="transmembrane region" description="Helical" evidence="2">
    <location>
        <begin position="186"/>
        <end position="206"/>
    </location>
</feature>
<feature type="binding site" description="covalent" evidence="2">
    <location>
        <position position="35"/>
    </location>
    <ligand>
        <name>heme c</name>
        <dbReference type="ChEBI" id="CHEBI:61717"/>
    </ligand>
</feature>
<feature type="binding site" description="axial binding residue" evidence="2">
    <location>
        <position position="86"/>
    </location>
    <ligand>
        <name>heme b</name>
        <dbReference type="ChEBI" id="CHEBI:60344"/>
        <label>2</label>
    </ligand>
    <ligandPart>
        <name>Fe</name>
        <dbReference type="ChEBI" id="CHEBI:18248"/>
    </ligandPart>
</feature>
<feature type="binding site" description="axial binding residue" evidence="2">
    <location>
        <position position="100"/>
    </location>
    <ligand>
        <name>heme b</name>
        <dbReference type="ChEBI" id="CHEBI:60344"/>
        <label>1</label>
    </ligand>
    <ligandPart>
        <name>Fe</name>
        <dbReference type="ChEBI" id="CHEBI:18248"/>
    </ligandPart>
</feature>
<feature type="binding site" description="axial binding residue" evidence="2">
    <location>
        <position position="187"/>
    </location>
    <ligand>
        <name>heme b</name>
        <dbReference type="ChEBI" id="CHEBI:60344"/>
        <label>2</label>
    </ligand>
    <ligandPart>
        <name>Fe</name>
        <dbReference type="ChEBI" id="CHEBI:18248"/>
    </ligandPart>
</feature>
<feature type="binding site" description="axial binding residue" evidence="2">
    <location>
        <position position="202"/>
    </location>
    <ligand>
        <name>heme b</name>
        <dbReference type="ChEBI" id="CHEBI:60344"/>
        <label>1</label>
    </ligand>
    <ligandPart>
        <name>Fe</name>
        <dbReference type="ChEBI" id="CHEBI:18248"/>
    </ligandPart>
</feature>
<comment type="function">
    <text evidence="2">Component of the cytochrome b6-f complex, which mediates electron transfer between photosystem II (PSII) and photosystem I (PSI), cyclic electron flow around PSI, and state transitions.</text>
</comment>
<comment type="cofactor">
    <cofactor evidence="2">
        <name>heme b</name>
        <dbReference type="ChEBI" id="CHEBI:60344"/>
    </cofactor>
    <text evidence="2">Binds 2 heme b groups non-covalently with two histidine residues as axial ligands.</text>
</comment>
<comment type="cofactor">
    <cofactor evidence="2">
        <name>heme c</name>
        <dbReference type="ChEBI" id="CHEBI:61717"/>
    </cofactor>
    <text evidence="2">Binds one heme group covalently by a single cysteine link with no axial amino acid ligand. This heme was named heme ci.</text>
</comment>
<comment type="subunit">
    <text evidence="2">The 4 large subunits of the cytochrome b6-f complex are cytochrome b6, subunit IV (17 kDa polypeptide, PetD), cytochrome f and the Rieske protein, while the 4 small subunits are PetG, PetL, PetM and PetN. The complex functions as a dimer.</text>
</comment>
<comment type="subcellular location">
    <subcellularLocation>
        <location evidence="2">Plastid</location>
        <location evidence="2">Chloroplast thylakoid membrane</location>
        <topology evidence="2">Multi-pass membrane protein</topology>
    </subcellularLocation>
</comment>
<comment type="RNA editing">
    <location>
        <position position="204" evidence="1"/>
    </location>
</comment>
<comment type="miscellaneous">
    <text evidence="2">Heme 1 (or BH or b566) is high-potential and absorbs at about 566 nm, and heme 2 (or BL or b562) is low-potential and absorbs at about 562 nm.</text>
</comment>
<comment type="similarity">
    <text evidence="2">Belongs to the cytochrome b family. PetB subfamily.</text>
</comment>
<geneLocation type="chloroplast"/>
<evidence type="ECO:0000250" key="1"/>
<evidence type="ECO:0000255" key="2">
    <source>
        <dbReference type="HAMAP-Rule" id="MF_00633"/>
    </source>
</evidence>
<accession>P60162</accession>
<accession>P12362</accession>
<accession>Q32438</accession>
<keyword id="KW-0150">Chloroplast</keyword>
<keyword id="KW-0249">Electron transport</keyword>
<keyword id="KW-0349">Heme</keyword>
<keyword id="KW-0408">Iron</keyword>
<keyword id="KW-0472">Membrane</keyword>
<keyword id="KW-0479">Metal-binding</keyword>
<keyword id="KW-0602">Photosynthesis</keyword>
<keyword id="KW-0934">Plastid</keyword>
<keyword id="KW-1185">Reference proteome</keyword>
<keyword id="KW-0691">RNA editing</keyword>
<keyword id="KW-0793">Thylakoid</keyword>
<keyword id="KW-0812">Transmembrane</keyword>
<keyword id="KW-1133">Transmembrane helix</keyword>
<keyword id="KW-0813">Transport</keyword>
<proteinExistence type="inferred from homology"/>
<dbReference type="EMBL" id="X54751">
    <property type="protein sequence ID" value="CAA38551.1"/>
    <property type="status" value="ALT_SEQ"/>
    <property type="molecule type" value="Genomic_DNA"/>
</dbReference>
<dbReference type="EMBL" id="X54749">
    <property type="protein sequence ID" value="CAA38545.1"/>
    <property type="molecule type" value="Genomic_DNA"/>
</dbReference>
<dbReference type="EMBL" id="AB042240">
    <property type="protein sequence ID" value="BAB47063.1"/>
    <property type="status" value="ALT_SEQ"/>
    <property type="molecule type" value="Genomic_DNA"/>
</dbReference>
<dbReference type="PIR" id="S14961">
    <property type="entry name" value="S14961"/>
</dbReference>
<dbReference type="RefSeq" id="NP_114287.1">
    <property type="nucleotide sequence ID" value="NC_002762.1"/>
</dbReference>
<dbReference type="SMR" id="P60162"/>
<dbReference type="STRING" id="4565.P60162"/>
<dbReference type="PaxDb" id="4565-EPlTAEP00000010066"/>
<dbReference type="GeneID" id="803106"/>
<dbReference type="KEGG" id="taes:803106"/>
<dbReference type="eggNOG" id="KOG4663">
    <property type="taxonomic scope" value="Eukaryota"/>
</dbReference>
<dbReference type="Proteomes" id="UP000019116">
    <property type="component" value="Chloroplast"/>
</dbReference>
<dbReference type="GO" id="GO:0009535">
    <property type="term" value="C:chloroplast thylakoid membrane"/>
    <property type="evidence" value="ECO:0007669"/>
    <property type="project" value="UniProtKB-SubCell"/>
</dbReference>
<dbReference type="GO" id="GO:0016020">
    <property type="term" value="C:membrane"/>
    <property type="evidence" value="ECO:0000318"/>
    <property type="project" value="GO_Central"/>
</dbReference>
<dbReference type="GO" id="GO:0045158">
    <property type="term" value="F:electron transporter, transferring electrons within cytochrome b6/f complex of photosystem II activity"/>
    <property type="evidence" value="ECO:0007669"/>
    <property type="project" value="UniProtKB-UniRule"/>
</dbReference>
<dbReference type="GO" id="GO:0046872">
    <property type="term" value="F:metal ion binding"/>
    <property type="evidence" value="ECO:0007669"/>
    <property type="project" value="UniProtKB-KW"/>
</dbReference>
<dbReference type="GO" id="GO:0016491">
    <property type="term" value="F:oxidoreductase activity"/>
    <property type="evidence" value="ECO:0007669"/>
    <property type="project" value="InterPro"/>
</dbReference>
<dbReference type="GO" id="GO:0015979">
    <property type="term" value="P:photosynthesis"/>
    <property type="evidence" value="ECO:0007669"/>
    <property type="project" value="UniProtKB-UniRule"/>
</dbReference>
<dbReference type="GO" id="GO:0022904">
    <property type="term" value="P:respiratory electron transport chain"/>
    <property type="evidence" value="ECO:0007669"/>
    <property type="project" value="InterPro"/>
</dbReference>
<dbReference type="CDD" id="cd00284">
    <property type="entry name" value="Cytochrome_b_N"/>
    <property type="match status" value="1"/>
</dbReference>
<dbReference type="FunFam" id="1.20.810.10:FF:000001">
    <property type="entry name" value="Cytochrome b6"/>
    <property type="match status" value="1"/>
</dbReference>
<dbReference type="Gene3D" id="1.20.810.10">
    <property type="entry name" value="Cytochrome Bc1 Complex, Chain C"/>
    <property type="match status" value="1"/>
</dbReference>
<dbReference type="HAMAP" id="MF_00633">
    <property type="entry name" value="Cytb6_f_cytb6"/>
    <property type="match status" value="1"/>
</dbReference>
<dbReference type="InterPro" id="IPR005797">
    <property type="entry name" value="Cyt_b/b6_N"/>
</dbReference>
<dbReference type="InterPro" id="IPR023530">
    <property type="entry name" value="Cyt_B6_PetB"/>
</dbReference>
<dbReference type="InterPro" id="IPR027387">
    <property type="entry name" value="Cytb/b6-like_sf"/>
</dbReference>
<dbReference type="InterPro" id="IPR048259">
    <property type="entry name" value="Cytochrome_b_N_euk/bac"/>
</dbReference>
<dbReference type="InterPro" id="IPR016174">
    <property type="entry name" value="Di-haem_cyt_TM"/>
</dbReference>
<dbReference type="NCBIfam" id="NF002990">
    <property type="entry name" value="PRK03735.1"/>
    <property type="match status" value="1"/>
</dbReference>
<dbReference type="PANTHER" id="PTHR19271">
    <property type="entry name" value="CYTOCHROME B"/>
    <property type="match status" value="1"/>
</dbReference>
<dbReference type="PANTHER" id="PTHR19271:SF16">
    <property type="entry name" value="CYTOCHROME B"/>
    <property type="match status" value="1"/>
</dbReference>
<dbReference type="Pfam" id="PF00033">
    <property type="entry name" value="Cytochrome_B"/>
    <property type="match status" value="1"/>
</dbReference>
<dbReference type="PIRSF" id="PIRSF000032">
    <property type="entry name" value="Cytochrome_b6"/>
    <property type="match status" value="1"/>
</dbReference>
<dbReference type="SUPFAM" id="SSF81342">
    <property type="entry name" value="Transmembrane di-heme cytochromes"/>
    <property type="match status" value="1"/>
</dbReference>
<dbReference type="PROSITE" id="PS51002">
    <property type="entry name" value="CYTB_NTER"/>
    <property type="match status" value="1"/>
</dbReference>
<sequence>MSKVYDWFEERLEIQAIADDITSKYVPPHVNIFYCLGGITLTCFLVQVATGFAMTFYYRPTVTEAFSSVQYIMTEANFGWLIRSVHRWSASMMVLMMILHVFRVYLTGGFKKPRELTWVTGVVLAVLTASFGVTGYSLPWDQIGYWAVKIVTGVPDAIPVIGSPLVELLRGSASVGQSTLTRFYSLHTFVLPLLTAVFMLMHFLMIRKQGISGPL</sequence>
<protein>
    <recommendedName>
        <fullName evidence="2">Cytochrome b6</fullName>
    </recommendedName>
</protein>
<gene>
    <name evidence="2" type="primary">petB</name>
</gene>
<reference key="1">
    <citation type="journal article" date="1991" name="Plant Mol. Biol.">
        <title>Nucleotide sequence of the wheat chloroplast petB and petD genes encoding apocytochrome b-563 and subunit IV of the cytochrome bf complex.</title>
        <authorList>
            <person name="Hird S.M."/>
            <person name="Wilson R.J."/>
            <person name="Dyer T.A."/>
            <person name="Gray J.C."/>
        </authorList>
    </citation>
    <scope>NUCLEOTIDE SEQUENCE [GENOMIC DNA]</scope>
    <source>
        <strain>cv. Mardler</strain>
    </source>
</reference>
<reference key="2">
    <citation type="journal article" date="2000" name="Plant Mol. Biol. Rep.">
        <title>Chinese spring wheat (Triticum aestivum L.) chloroplast genome: complete sequence and contig clones.</title>
        <authorList>
            <person name="Ogihara Y."/>
            <person name="Isono K."/>
            <person name="Kojima T."/>
            <person name="Endo A."/>
            <person name="Hanaoka M."/>
            <person name="Shiina T."/>
            <person name="Terachi T."/>
            <person name="Utsugi S."/>
            <person name="Murata M."/>
            <person name="Mori N."/>
            <person name="Takumi S."/>
            <person name="Ikeo K."/>
            <person name="Gojobori T."/>
            <person name="Murai R."/>
            <person name="Murai K."/>
            <person name="Matsuoka Y."/>
            <person name="Ohnishi Y."/>
            <person name="Tajiri H."/>
            <person name="Tsunewaki K."/>
        </authorList>
    </citation>
    <scope>NUCLEOTIDE SEQUENCE [LARGE SCALE GENOMIC DNA]</scope>
    <source>
        <strain>cv. Chinese Spring</strain>
    </source>
</reference>
<name>CYB6_WHEAT</name>
<organism>
    <name type="scientific">Triticum aestivum</name>
    <name type="common">Wheat</name>
    <dbReference type="NCBI Taxonomy" id="4565"/>
    <lineage>
        <taxon>Eukaryota</taxon>
        <taxon>Viridiplantae</taxon>
        <taxon>Streptophyta</taxon>
        <taxon>Embryophyta</taxon>
        <taxon>Tracheophyta</taxon>
        <taxon>Spermatophyta</taxon>
        <taxon>Magnoliopsida</taxon>
        <taxon>Liliopsida</taxon>
        <taxon>Poales</taxon>
        <taxon>Poaceae</taxon>
        <taxon>BOP clade</taxon>
        <taxon>Pooideae</taxon>
        <taxon>Triticodae</taxon>
        <taxon>Triticeae</taxon>
        <taxon>Triticinae</taxon>
        <taxon>Triticum</taxon>
    </lineage>
</organism>